<proteinExistence type="inferred from homology"/>
<protein>
    <recommendedName>
        <fullName evidence="1">Fasciclin-like arabinogalactan protein ARB_02922</fullName>
    </recommendedName>
</protein>
<sequence length="421" mass="43547">MLLYYILVALWATVTYAKSFSEDISEMPELSEMSSYLNQTPEAKDVLDQQKNVTLLALENSAFRDFVGQGEGNDNQSSSNSSLLRGIFSYQLVKGLHNSEQITTTPQFSPTELNDAGFTNVSSGQIVQLVEKDGKDYAISGLNDNSTIIKPGVDVENGVIHVIDRPLTLPQSVTATLQAANLTSFQGALQRGNAVSNANDPKDITLFAPRNLGFQRIGTAFENISAEDLGQIANYHIVKGKVLYSPDLTDADHPTYADKDLHISTVDGRSYVNSARVESTNLLVNNGVIHVISDVLNPNNDTAKPVPNADPPPPAFENANPVSTDPLTDGIPSPTSVIPLPGITSGGEGGGGGGGESTAPPSPTATVTETQSGGGGGGGGGAGGGPGPTATNTPQPGAAATERAKAGLAAVVGLGVVLINA</sequence>
<reference key="1">
    <citation type="journal article" date="2011" name="Genome Biol.">
        <title>Comparative and functional genomics provide insights into the pathogenicity of dermatophytic fungi.</title>
        <authorList>
            <person name="Burmester A."/>
            <person name="Shelest E."/>
            <person name="Gloeckner G."/>
            <person name="Heddergott C."/>
            <person name="Schindler S."/>
            <person name="Staib P."/>
            <person name="Heidel A."/>
            <person name="Felder M."/>
            <person name="Petzold A."/>
            <person name="Szafranski K."/>
            <person name="Feuermann M."/>
            <person name="Pedruzzi I."/>
            <person name="Priebe S."/>
            <person name="Groth M."/>
            <person name="Winkler R."/>
            <person name="Li W."/>
            <person name="Kniemeyer O."/>
            <person name="Schroeckh V."/>
            <person name="Hertweck C."/>
            <person name="Hube B."/>
            <person name="White T.C."/>
            <person name="Platzer M."/>
            <person name="Guthke R."/>
            <person name="Heitman J."/>
            <person name="Woestemeyer J."/>
            <person name="Zipfel P.F."/>
            <person name="Monod M."/>
            <person name="Brakhage A.A."/>
        </authorList>
    </citation>
    <scope>NUCLEOTIDE SEQUENCE [LARGE SCALE GENOMIC DNA]</scope>
    <source>
        <strain>ATCC MYA-4681 / CBS 112371</strain>
    </source>
</reference>
<name>FLA_ARTBC</name>
<dbReference type="EMBL" id="ABSU01000032">
    <property type="protein sequence ID" value="EFE30243.1"/>
    <property type="molecule type" value="Genomic_DNA"/>
</dbReference>
<dbReference type="RefSeq" id="XP_003010883.1">
    <property type="nucleotide sequence ID" value="XM_003010837.1"/>
</dbReference>
<dbReference type="SMR" id="D4B388"/>
<dbReference type="GeneID" id="9524998"/>
<dbReference type="KEGG" id="abe:ARB_02922"/>
<dbReference type="eggNOG" id="KOG1437">
    <property type="taxonomic scope" value="Eukaryota"/>
</dbReference>
<dbReference type="HOGENOM" id="CLU_031281_2_3_1"/>
<dbReference type="OMA" id="RGIFSYQ"/>
<dbReference type="OrthoDB" id="286301at2759"/>
<dbReference type="Proteomes" id="UP000008866">
    <property type="component" value="Unassembled WGS sequence"/>
</dbReference>
<dbReference type="GO" id="GO:0000329">
    <property type="term" value="C:fungal-type vacuole membrane"/>
    <property type="evidence" value="ECO:0007669"/>
    <property type="project" value="TreeGrafter"/>
</dbReference>
<dbReference type="GO" id="GO:0005886">
    <property type="term" value="C:plasma membrane"/>
    <property type="evidence" value="ECO:0007669"/>
    <property type="project" value="UniProtKB-SubCell"/>
</dbReference>
<dbReference type="GO" id="GO:0098552">
    <property type="term" value="C:side of membrane"/>
    <property type="evidence" value="ECO:0007669"/>
    <property type="project" value="UniProtKB-KW"/>
</dbReference>
<dbReference type="GO" id="GO:0016236">
    <property type="term" value="P:macroautophagy"/>
    <property type="evidence" value="ECO:0007669"/>
    <property type="project" value="TreeGrafter"/>
</dbReference>
<dbReference type="Gene3D" id="2.30.180.10">
    <property type="entry name" value="FAS1 domain"/>
    <property type="match status" value="2"/>
</dbReference>
<dbReference type="InterPro" id="IPR050904">
    <property type="entry name" value="Adhesion/Biosynth-related"/>
</dbReference>
<dbReference type="InterPro" id="IPR036378">
    <property type="entry name" value="FAS1_dom_sf"/>
</dbReference>
<dbReference type="InterPro" id="IPR000782">
    <property type="entry name" value="FAS1_domain"/>
</dbReference>
<dbReference type="PANTHER" id="PTHR10900:SF77">
    <property type="entry name" value="FI19380P1"/>
    <property type="match status" value="1"/>
</dbReference>
<dbReference type="PANTHER" id="PTHR10900">
    <property type="entry name" value="PERIOSTIN-RELATED"/>
    <property type="match status" value="1"/>
</dbReference>
<dbReference type="Pfam" id="PF02469">
    <property type="entry name" value="Fasciclin"/>
    <property type="match status" value="2"/>
</dbReference>
<dbReference type="SMART" id="SM00554">
    <property type="entry name" value="FAS1"/>
    <property type="match status" value="2"/>
</dbReference>
<dbReference type="SUPFAM" id="SSF82153">
    <property type="entry name" value="FAS1 domain"/>
    <property type="match status" value="2"/>
</dbReference>
<dbReference type="PROSITE" id="PS50213">
    <property type="entry name" value="FAS1"/>
    <property type="match status" value="2"/>
</dbReference>
<accession>D4B388</accession>
<comment type="function">
    <text evidence="1">May be a cell surface adhesion protein.</text>
</comment>
<comment type="subcellular location">
    <subcellularLocation>
        <location evidence="2">Cell membrane</location>
        <topology evidence="2">Lipid-anchor</topology>
        <topology evidence="2">GPI-anchor</topology>
    </subcellularLocation>
</comment>
<comment type="similarity">
    <text evidence="6">Belongs to the fasciclin-like AGP family.</text>
</comment>
<keyword id="KW-1003">Cell membrane</keyword>
<keyword id="KW-0325">Glycoprotein</keyword>
<keyword id="KW-0336">GPI-anchor</keyword>
<keyword id="KW-0449">Lipoprotein</keyword>
<keyword id="KW-0472">Membrane</keyword>
<keyword id="KW-1185">Reference proteome</keyword>
<keyword id="KW-0677">Repeat</keyword>
<keyword id="KW-0732">Signal</keyword>
<evidence type="ECO:0000250" key="1">
    <source>
        <dbReference type="UniProtKB" id="O22126"/>
    </source>
</evidence>
<evidence type="ECO:0000255" key="2"/>
<evidence type="ECO:0000255" key="3">
    <source>
        <dbReference type="PROSITE-ProRule" id="PRU00082"/>
    </source>
</evidence>
<evidence type="ECO:0000255" key="4">
    <source>
        <dbReference type="PROSITE-ProRule" id="PRU00498"/>
    </source>
</evidence>
<evidence type="ECO:0000256" key="5">
    <source>
        <dbReference type="SAM" id="MobiDB-lite"/>
    </source>
</evidence>
<evidence type="ECO:0000305" key="6"/>
<gene>
    <name type="ORF">ARB_02922</name>
</gene>
<organism>
    <name type="scientific">Arthroderma benhamiae (strain ATCC MYA-4681 / CBS 112371)</name>
    <name type="common">Trichophyton mentagrophytes</name>
    <dbReference type="NCBI Taxonomy" id="663331"/>
    <lineage>
        <taxon>Eukaryota</taxon>
        <taxon>Fungi</taxon>
        <taxon>Dikarya</taxon>
        <taxon>Ascomycota</taxon>
        <taxon>Pezizomycotina</taxon>
        <taxon>Eurotiomycetes</taxon>
        <taxon>Eurotiomycetidae</taxon>
        <taxon>Onygenales</taxon>
        <taxon>Arthrodermataceae</taxon>
        <taxon>Trichophyton</taxon>
    </lineage>
</organism>
<feature type="signal peptide" evidence="2">
    <location>
        <begin position="1"/>
        <end position="17"/>
    </location>
</feature>
<feature type="chain" id="PRO_0000434496" description="Fasciclin-like arabinogalactan protein ARB_02922" evidence="2">
    <location>
        <begin position="18"/>
        <end position="397"/>
    </location>
</feature>
<feature type="propeptide" id="PRO_0000434497" description="Removed in mature form" evidence="2">
    <location>
        <begin position="398"/>
        <end position="421"/>
    </location>
</feature>
<feature type="domain" description="FAS1 1" evidence="3">
    <location>
        <begin position="18"/>
        <end position="167"/>
    </location>
</feature>
<feature type="domain" description="FAS1 2" evidence="3">
    <location>
        <begin position="169"/>
        <end position="296"/>
    </location>
</feature>
<feature type="region of interest" description="Disordered" evidence="5">
    <location>
        <begin position="300"/>
        <end position="401"/>
    </location>
</feature>
<feature type="compositionally biased region" description="Gly residues" evidence="5">
    <location>
        <begin position="344"/>
        <end position="356"/>
    </location>
</feature>
<feature type="compositionally biased region" description="Gly residues" evidence="5">
    <location>
        <begin position="372"/>
        <end position="387"/>
    </location>
</feature>
<feature type="compositionally biased region" description="Low complexity" evidence="5">
    <location>
        <begin position="388"/>
        <end position="401"/>
    </location>
</feature>
<feature type="lipid moiety-binding region" description="GPI-anchor amidated glycine" evidence="2">
    <location>
        <position position="397"/>
    </location>
</feature>
<feature type="glycosylation site" description="N-linked (GlcNAc...) asparagine" evidence="4">
    <location>
        <position position="52"/>
    </location>
</feature>
<feature type="glycosylation site" description="N-linked (GlcNAc...) asparagine" evidence="4">
    <location>
        <position position="75"/>
    </location>
</feature>
<feature type="glycosylation site" description="N-linked (GlcNAc...) asparagine" evidence="4">
    <location>
        <position position="80"/>
    </location>
</feature>
<feature type="glycosylation site" description="N-linked (GlcNAc...) asparagine" evidence="4">
    <location>
        <position position="120"/>
    </location>
</feature>
<feature type="glycosylation site" description="N-linked (GlcNAc...) asparagine" evidence="4">
    <location>
        <position position="145"/>
    </location>
</feature>
<feature type="glycosylation site" description="N-linked (GlcNAc...) asparagine" evidence="4">
    <location>
        <position position="181"/>
    </location>
</feature>
<feature type="glycosylation site" description="N-linked (GlcNAc...) asparagine" evidence="4">
    <location>
        <position position="223"/>
    </location>
</feature>
<feature type="glycosylation site" description="N-linked (GlcNAc...) asparagine" evidence="4">
    <location>
        <position position="300"/>
    </location>
</feature>